<keyword id="KW-0963">Cytoplasm</keyword>
<keyword id="KW-0342">GTP-binding</keyword>
<keyword id="KW-0378">Hydrolase</keyword>
<keyword id="KW-0547">Nucleotide-binding</keyword>
<keyword id="KW-1185">Reference proteome</keyword>
<keyword id="KW-0687">Ribonucleoprotein</keyword>
<keyword id="KW-0694">RNA-binding</keyword>
<keyword id="KW-0733">Signal recognition particle</keyword>
<protein>
    <recommendedName>
        <fullName evidence="1">Signal recognition particle protein</fullName>
        <ecNumber evidence="1">3.6.5.4</ecNumber>
    </recommendedName>
    <alternativeName>
        <fullName evidence="1">Fifty-four homolog</fullName>
    </alternativeName>
</protein>
<comment type="function">
    <text evidence="1">Involved in targeting and insertion of nascent membrane proteins into the cytoplasmic membrane. Binds to the hydrophobic signal sequence of the ribosome-nascent chain (RNC) as it emerges from the ribosomes. The SRP-RNC complex is then targeted to the cytoplasmic membrane where it interacts with the SRP receptor FtsY.</text>
</comment>
<comment type="catalytic activity">
    <reaction evidence="1">
        <text>GTP + H2O = GDP + phosphate + H(+)</text>
        <dbReference type="Rhea" id="RHEA:19669"/>
        <dbReference type="ChEBI" id="CHEBI:15377"/>
        <dbReference type="ChEBI" id="CHEBI:15378"/>
        <dbReference type="ChEBI" id="CHEBI:37565"/>
        <dbReference type="ChEBI" id="CHEBI:43474"/>
        <dbReference type="ChEBI" id="CHEBI:58189"/>
        <dbReference type="EC" id="3.6.5.4"/>
    </reaction>
</comment>
<comment type="subunit">
    <text evidence="1">Part of the signal recognition particle protein translocation system, which is composed of SRP and FtsY.</text>
</comment>
<comment type="subcellular location">
    <subcellularLocation>
        <location evidence="1">Cytoplasm</location>
    </subcellularLocation>
    <text evidence="1">The SRP-RNC complex is targeted to the cytoplasmic membrane.</text>
</comment>
<comment type="domain">
    <text evidence="1">Composed of three domains: the N-terminal N domain, which is responsible for interactions with the ribosome, the central G domain, which binds GTP, and the C-terminal M domain, which binds the RNA and the signal sequence of the RNC.</text>
</comment>
<comment type="similarity">
    <text evidence="1">Belongs to the GTP-binding SRP family. SRP54 subfamily.</text>
</comment>
<evidence type="ECO:0000255" key="1">
    <source>
        <dbReference type="HAMAP-Rule" id="MF_00306"/>
    </source>
</evidence>
<evidence type="ECO:0000256" key="2">
    <source>
        <dbReference type="SAM" id="MobiDB-lite"/>
    </source>
</evidence>
<accession>P9WGD6</accession>
<accession>L0TDR8</accession>
<accession>P66844</accession>
<accession>Q10963</accession>
<reference key="1">
    <citation type="journal article" date="2002" name="J. Bacteriol.">
        <title>Whole-genome comparison of Mycobacterium tuberculosis clinical and laboratory strains.</title>
        <authorList>
            <person name="Fleischmann R.D."/>
            <person name="Alland D."/>
            <person name="Eisen J.A."/>
            <person name="Carpenter L."/>
            <person name="White O."/>
            <person name="Peterson J.D."/>
            <person name="DeBoy R.T."/>
            <person name="Dodson R.J."/>
            <person name="Gwinn M.L."/>
            <person name="Haft D.H."/>
            <person name="Hickey E.K."/>
            <person name="Kolonay J.F."/>
            <person name="Nelson W.C."/>
            <person name="Umayam L.A."/>
            <person name="Ermolaeva M.D."/>
            <person name="Salzberg S.L."/>
            <person name="Delcher A."/>
            <person name="Utterback T.R."/>
            <person name="Weidman J.F."/>
            <person name="Khouri H.M."/>
            <person name="Gill J."/>
            <person name="Mikula A."/>
            <person name="Bishai W."/>
            <person name="Jacobs W.R. Jr."/>
            <person name="Venter J.C."/>
            <person name="Fraser C.M."/>
        </authorList>
    </citation>
    <scope>NUCLEOTIDE SEQUENCE [LARGE SCALE GENOMIC DNA]</scope>
    <source>
        <strain>CDC 1551 / Oshkosh</strain>
    </source>
</reference>
<feature type="chain" id="PRO_0000428380" description="Signal recognition particle protein">
    <location>
        <begin position="1"/>
        <end position="525"/>
    </location>
</feature>
<feature type="region of interest" description="Disordered" evidence="2">
    <location>
        <begin position="437"/>
        <end position="525"/>
    </location>
</feature>
<feature type="compositionally biased region" description="Basic residues" evidence="2">
    <location>
        <begin position="447"/>
        <end position="467"/>
    </location>
</feature>
<feature type="compositionally biased region" description="Low complexity" evidence="2">
    <location>
        <begin position="480"/>
        <end position="497"/>
    </location>
</feature>
<feature type="binding site" evidence="1">
    <location>
        <begin position="107"/>
        <end position="114"/>
    </location>
    <ligand>
        <name>GTP</name>
        <dbReference type="ChEBI" id="CHEBI:37565"/>
    </ligand>
</feature>
<feature type="binding site" evidence="1">
    <location>
        <begin position="196"/>
        <end position="200"/>
    </location>
    <ligand>
        <name>GTP</name>
        <dbReference type="ChEBI" id="CHEBI:37565"/>
    </ligand>
</feature>
<feature type="binding site" evidence="1">
    <location>
        <begin position="254"/>
        <end position="257"/>
    </location>
    <ligand>
        <name>GTP</name>
        <dbReference type="ChEBI" id="CHEBI:37565"/>
    </ligand>
</feature>
<gene>
    <name evidence="1" type="primary">ffh</name>
    <name type="ordered locus">MT2984</name>
</gene>
<organism>
    <name type="scientific">Mycobacterium tuberculosis (strain CDC 1551 / Oshkosh)</name>
    <dbReference type="NCBI Taxonomy" id="83331"/>
    <lineage>
        <taxon>Bacteria</taxon>
        <taxon>Bacillati</taxon>
        <taxon>Actinomycetota</taxon>
        <taxon>Actinomycetes</taxon>
        <taxon>Mycobacteriales</taxon>
        <taxon>Mycobacteriaceae</taxon>
        <taxon>Mycobacterium</taxon>
        <taxon>Mycobacterium tuberculosis complex</taxon>
    </lineage>
</organism>
<dbReference type="EC" id="3.6.5.4" evidence="1"/>
<dbReference type="EMBL" id="AE000516">
    <property type="protein sequence ID" value="AAK47310.1"/>
    <property type="molecule type" value="Genomic_DNA"/>
</dbReference>
<dbReference type="PIR" id="D70747">
    <property type="entry name" value="D70747"/>
</dbReference>
<dbReference type="RefSeq" id="WP_003414748.1">
    <property type="nucleotide sequence ID" value="NZ_KK341227.1"/>
</dbReference>
<dbReference type="SMR" id="P9WGD6"/>
<dbReference type="GeneID" id="45426903"/>
<dbReference type="KEGG" id="mtc:MT2984"/>
<dbReference type="PATRIC" id="fig|83331.31.peg.3224"/>
<dbReference type="HOGENOM" id="CLU_009301_6_0_11"/>
<dbReference type="Proteomes" id="UP000001020">
    <property type="component" value="Chromosome"/>
</dbReference>
<dbReference type="GO" id="GO:0048500">
    <property type="term" value="C:signal recognition particle"/>
    <property type="evidence" value="ECO:0007669"/>
    <property type="project" value="UniProtKB-UniRule"/>
</dbReference>
<dbReference type="GO" id="GO:0008312">
    <property type="term" value="F:7S RNA binding"/>
    <property type="evidence" value="ECO:0007669"/>
    <property type="project" value="InterPro"/>
</dbReference>
<dbReference type="GO" id="GO:0016887">
    <property type="term" value="F:ATP hydrolysis activity"/>
    <property type="evidence" value="ECO:0007669"/>
    <property type="project" value="InterPro"/>
</dbReference>
<dbReference type="GO" id="GO:0005525">
    <property type="term" value="F:GTP binding"/>
    <property type="evidence" value="ECO:0007669"/>
    <property type="project" value="UniProtKB-UniRule"/>
</dbReference>
<dbReference type="GO" id="GO:0003924">
    <property type="term" value="F:GTPase activity"/>
    <property type="evidence" value="ECO:0007669"/>
    <property type="project" value="UniProtKB-UniRule"/>
</dbReference>
<dbReference type="GO" id="GO:0006614">
    <property type="term" value="P:SRP-dependent cotranslational protein targeting to membrane"/>
    <property type="evidence" value="ECO:0007669"/>
    <property type="project" value="InterPro"/>
</dbReference>
<dbReference type="CDD" id="cd18539">
    <property type="entry name" value="SRP_G"/>
    <property type="match status" value="1"/>
</dbReference>
<dbReference type="FunFam" id="3.40.50.300:FF:000022">
    <property type="entry name" value="Signal recognition particle 54 kDa subunit"/>
    <property type="match status" value="1"/>
</dbReference>
<dbReference type="Gene3D" id="3.40.50.300">
    <property type="entry name" value="P-loop containing nucleotide triphosphate hydrolases"/>
    <property type="match status" value="1"/>
</dbReference>
<dbReference type="Gene3D" id="1.20.120.140">
    <property type="entry name" value="Signal recognition particle SRP54, nucleotide-binding domain"/>
    <property type="match status" value="1"/>
</dbReference>
<dbReference type="Gene3D" id="1.10.260.30">
    <property type="entry name" value="Signal recognition particle, SRP54 subunit, M-domain"/>
    <property type="match status" value="1"/>
</dbReference>
<dbReference type="HAMAP" id="MF_00306">
    <property type="entry name" value="SRP54"/>
    <property type="match status" value="1"/>
</dbReference>
<dbReference type="InterPro" id="IPR003593">
    <property type="entry name" value="AAA+_ATPase"/>
</dbReference>
<dbReference type="InterPro" id="IPR027417">
    <property type="entry name" value="P-loop_NTPase"/>
</dbReference>
<dbReference type="InterPro" id="IPR036891">
    <property type="entry name" value="Signal_recog_part_SRP54_M_sf"/>
</dbReference>
<dbReference type="InterPro" id="IPR013822">
    <property type="entry name" value="Signal_recog_particl_SRP54_hlx"/>
</dbReference>
<dbReference type="InterPro" id="IPR004125">
    <property type="entry name" value="Signal_recog_particle_SRP54_M"/>
</dbReference>
<dbReference type="InterPro" id="IPR004780">
    <property type="entry name" value="SRP"/>
</dbReference>
<dbReference type="InterPro" id="IPR022941">
    <property type="entry name" value="SRP54"/>
</dbReference>
<dbReference type="InterPro" id="IPR000897">
    <property type="entry name" value="SRP54_GTPase_dom"/>
</dbReference>
<dbReference type="InterPro" id="IPR042101">
    <property type="entry name" value="SRP54_N_sf"/>
</dbReference>
<dbReference type="NCBIfam" id="TIGR00959">
    <property type="entry name" value="ffh"/>
    <property type="match status" value="1"/>
</dbReference>
<dbReference type="PANTHER" id="PTHR11564">
    <property type="entry name" value="SIGNAL RECOGNITION PARTICLE 54K PROTEIN SRP54"/>
    <property type="match status" value="1"/>
</dbReference>
<dbReference type="PANTHER" id="PTHR11564:SF5">
    <property type="entry name" value="SIGNAL RECOGNITION PARTICLE SUBUNIT SRP54"/>
    <property type="match status" value="1"/>
</dbReference>
<dbReference type="Pfam" id="PF00448">
    <property type="entry name" value="SRP54"/>
    <property type="match status" value="1"/>
</dbReference>
<dbReference type="Pfam" id="PF02881">
    <property type="entry name" value="SRP54_N"/>
    <property type="match status" value="1"/>
</dbReference>
<dbReference type="Pfam" id="PF02978">
    <property type="entry name" value="SRP_SPB"/>
    <property type="match status" value="1"/>
</dbReference>
<dbReference type="SMART" id="SM00382">
    <property type="entry name" value="AAA"/>
    <property type="match status" value="1"/>
</dbReference>
<dbReference type="SMART" id="SM00962">
    <property type="entry name" value="SRP54"/>
    <property type="match status" value="1"/>
</dbReference>
<dbReference type="SMART" id="SM00963">
    <property type="entry name" value="SRP54_N"/>
    <property type="match status" value="1"/>
</dbReference>
<dbReference type="SUPFAM" id="SSF52540">
    <property type="entry name" value="P-loop containing nucleoside triphosphate hydrolases"/>
    <property type="match status" value="1"/>
</dbReference>
<dbReference type="SUPFAM" id="SSF47446">
    <property type="entry name" value="Signal peptide-binding domain"/>
    <property type="match status" value="1"/>
</dbReference>
<dbReference type="PROSITE" id="PS00300">
    <property type="entry name" value="SRP54"/>
    <property type="match status" value="1"/>
</dbReference>
<sequence length="525" mass="55002">MFESLSDRLTAALQGLRGKGRLTDADIDATTREIRLALLEADVSLPVVRAFIHRIKERARGAEVSSALNPAQQVVKIVNEELISILGGETRELAFAKTPPTVVMLAGLQGSGKTTLAGKLAARLRGQGHTPLLVACDLQRPAAVNQLQVVGERAGVPVFAPHPGASPESGPGDPVAVAAAGLAEARAKHFDVVIVDTAGRLGIDEELMAQAAAIRDAINPDEVLFVLDAMIGQDAVTTAAAFGEGVGFTGVALTKLDGDARGGAALSVREVTGVPILFASTGEKLEDFDVFHPDRMASRILGMGDVLSLIEQAEQVFDAQQAEEAAAKIGAGELTLEDFLEQMLAVRKMGPIGNLLGMLPGAAQMKDALAEVDDKQLDRVQAIIRGMTPQERADPKIINASRRLRIANGSGVTVSEVNQLVERFFEARKMMSSMLGGMGIPGIGRKSATRKSKGAKGKSGKKSKKGTRGPTPPKVKSPFGVPGMPGLAGLPGGLPDLSQMPKGLDELPPGLADFDLSKLKFPGKK</sequence>
<proteinExistence type="inferred from homology"/>
<name>SRP54_MYCTO</name>